<comment type="function">
    <text evidence="1">Allows the formation of correctly charged Asn-tRNA(Asn) or Gln-tRNA(Gln) through the transamidation of misacylated Asp-tRNA(Asn) or Glu-tRNA(Gln) in organisms which lack either or both of asparaginyl-tRNA or glutaminyl-tRNA synthetases. The reaction takes place in the presence of glutamine and ATP through an activated phospho-Asp-tRNA(Asn) or phospho-Glu-tRNA(Gln).</text>
</comment>
<comment type="catalytic activity">
    <reaction evidence="1">
        <text>L-glutamyl-tRNA(Gln) + L-glutamine + ATP + H2O = L-glutaminyl-tRNA(Gln) + L-glutamate + ADP + phosphate + H(+)</text>
        <dbReference type="Rhea" id="RHEA:17521"/>
        <dbReference type="Rhea" id="RHEA-COMP:9681"/>
        <dbReference type="Rhea" id="RHEA-COMP:9684"/>
        <dbReference type="ChEBI" id="CHEBI:15377"/>
        <dbReference type="ChEBI" id="CHEBI:15378"/>
        <dbReference type="ChEBI" id="CHEBI:29985"/>
        <dbReference type="ChEBI" id="CHEBI:30616"/>
        <dbReference type="ChEBI" id="CHEBI:43474"/>
        <dbReference type="ChEBI" id="CHEBI:58359"/>
        <dbReference type="ChEBI" id="CHEBI:78520"/>
        <dbReference type="ChEBI" id="CHEBI:78521"/>
        <dbReference type="ChEBI" id="CHEBI:456216"/>
    </reaction>
</comment>
<comment type="catalytic activity">
    <reaction evidence="1">
        <text>L-aspartyl-tRNA(Asn) + L-glutamine + ATP + H2O = L-asparaginyl-tRNA(Asn) + L-glutamate + ADP + phosphate + 2 H(+)</text>
        <dbReference type="Rhea" id="RHEA:14513"/>
        <dbReference type="Rhea" id="RHEA-COMP:9674"/>
        <dbReference type="Rhea" id="RHEA-COMP:9677"/>
        <dbReference type="ChEBI" id="CHEBI:15377"/>
        <dbReference type="ChEBI" id="CHEBI:15378"/>
        <dbReference type="ChEBI" id="CHEBI:29985"/>
        <dbReference type="ChEBI" id="CHEBI:30616"/>
        <dbReference type="ChEBI" id="CHEBI:43474"/>
        <dbReference type="ChEBI" id="CHEBI:58359"/>
        <dbReference type="ChEBI" id="CHEBI:78515"/>
        <dbReference type="ChEBI" id="CHEBI:78516"/>
        <dbReference type="ChEBI" id="CHEBI:456216"/>
    </reaction>
</comment>
<comment type="subunit">
    <text evidence="1">Heterotrimer of A, B and C subunits.</text>
</comment>
<comment type="similarity">
    <text evidence="1">Belongs to the GatB/GatE family. GatB subfamily.</text>
</comment>
<protein>
    <recommendedName>
        <fullName evidence="1">Aspartyl/glutamyl-tRNA(Asn/Gln) amidotransferase subunit B</fullName>
        <shortName evidence="1">Asp/Glu-ADT subunit B</shortName>
        <ecNumber evidence="1">6.3.5.-</ecNumber>
    </recommendedName>
</protein>
<organism>
    <name type="scientific">Synechococcus elongatus (strain ATCC 33912 / PCC 7942 / FACHB-805)</name>
    <name type="common">Anacystis nidulans R2</name>
    <dbReference type="NCBI Taxonomy" id="1140"/>
    <lineage>
        <taxon>Bacteria</taxon>
        <taxon>Bacillati</taxon>
        <taxon>Cyanobacteriota</taxon>
        <taxon>Cyanophyceae</taxon>
        <taxon>Synechococcales</taxon>
        <taxon>Synechococcaceae</taxon>
        <taxon>Synechococcus</taxon>
    </lineage>
</organism>
<gene>
    <name evidence="1" type="primary">gatB</name>
    <name type="ordered locus">Synpcc7942_0118</name>
</gene>
<accession>Q31S19</accession>
<feature type="chain" id="PRO_0000241290" description="Aspartyl/glutamyl-tRNA(Asn/Gln) amidotransferase subunit B">
    <location>
        <begin position="1"/>
        <end position="494"/>
    </location>
</feature>
<proteinExistence type="inferred from homology"/>
<evidence type="ECO:0000255" key="1">
    <source>
        <dbReference type="HAMAP-Rule" id="MF_00121"/>
    </source>
</evidence>
<keyword id="KW-0067">ATP-binding</keyword>
<keyword id="KW-0436">Ligase</keyword>
<keyword id="KW-0547">Nucleotide-binding</keyword>
<keyword id="KW-0648">Protein biosynthesis</keyword>
<keyword id="KW-1185">Reference proteome</keyword>
<sequence>MTATAPVKTEYEAVIGLETHVQLGTATKIFSNASTEFGADPNTHIDPVVLGLPGTLPVLNQKVLEYAVKAGLALNCQIAPYSKFDRKQYFYPDLPKNYQISQYDLPIAEHGWIEIEVAEKGKEPYTKKIGVTRLHMEEDAGKLVHAGSDRLAGSTHSLVDYNRAGVALAEIVSEPDLRTGKEAAEYAQELRRIMRYLGVSDGNMAEGSLRCDVNISIRPKGTEKFGTKVEIKNMNSFNAIQRAIEFEIERQIRCLETGEPIVQETRLWDEGKQVTKSMRSKEGSSDYRYFPEPDLGPIEVSETQRETWRSELPELPAQKRHRYAEQYGLSAYDARVLTDEKSTADYYEATVAAGADAKQAANWLMGDIAAYVNANKLLVSDLPLQPQDLAELVNLIEAGTISGKIAKEILPELLEKGGSPKAIVEAKGLTQISDPAQIEALVDELLAAHPTELEQFRAGKTKLQGFFVGQLMKKTGGRVDPKLSNQILNQKLKG</sequence>
<name>GATB_SYNE7</name>
<reference key="1">
    <citation type="submission" date="2005-08" db="EMBL/GenBank/DDBJ databases">
        <title>Complete sequence of chromosome 1 of Synechococcus elongatus PCC 7942.</title>
        <authorList>
            <consortium name="US DOE Joint Genome Institute"/>
            <person name="Copeland A."/>
            <person name="Lucas S."/>
            <person name="Lapidus A."/>
            <person name="Barry K."/>
            <person name="Detter J.C."/>
            <person name="Glavina T."/>
            <person name="Hammon N."/>
            <person name="Israni S."/>
            <person name="Pitluck S."/>
            <person name="Schmutz J."/>
            <person name="Larimer F."/>
            <person name="Land M."/>
            <person name="Kyrpides N."/>
            <person name="Lykidis A."/>
            <person name="Golden S."/>
            <person name="Richardson P."/>
        </authorList>
    </citation>
    <scope>NUCLEOTIDE SEQUENCE [LARGE SCALE GENOMIC DNA]</scope>
    <source>
        <strain>ATCC 33912 / PCC 7942 / FACHB-805</strain>
    </source>
</reference>
<dbReference type="EC" id="6.3.5.-" evidence="1"/>
<dbReference type="EMBL" id="CP000100">
    <property type="protein sequence ID" value="ABB56150.1"/>
    <property type="molecule type" value="Genomic_DNA"/>
</dbReference>
<dbReference type="RefSeq" id="WP_011377450.1">
    <property type="nucleotide sequence ID" value="NZ_JACJTX010000002.1"/>
</dbReference>
<dbReference type="SMR" id="Q31S19"/>
<dbReference type="STRING" id="1140.Synpcc7942_0118"/>
<dbReference type="PaxDb" id="1140-Synpcc7942_0118"/>
<dbReference type="GeneID" id="72428928"/>
<dbReference type="KEGG" id="syf:Synpcc7942_0118"/>
<dbReference type="eggNOG" id="COG0064">
    <property type="taxonomic scope" value="Bacteria"/>
</dbReference>
<dbReference type="HOGENOM" id="CLU_019240_0_0_3"/>
<dbReference type="OrthoDB" id="9804078at2"/>
<dbReference type="BioCyc" id="MetaCyc:SYNPCC7942_0118-MONOMER"/>
<dbReference type="BioCyc" id="SYNEL:SYNPCC7942_0118-MONOMER"/>
<dbReference type="Proteomes" id="UP000889800">
    <property type="component" value="Chromosome"/>
</dbReference>
<dbReference type="GO" id="GO:0050566">
    <property type="term" value="F:asparaginyl-tRNA synthase (glutamine-hydrolyzing) activity"/>
    <property type="evidence" value="ECO:0007669"/>
    <property type="project" value="RHEA"/>
</dbReference>
<dbReference type="GO" id="GO:0005524">
    <property type="term" value="F:ATP binding"/>
    <property type="evidence" value="ECO:0007669"/>
    <property type="project" value="UniProtKB-KW"/>
</dbReference>
<dbReference type="GO" id="GO:0050567">
    <property type="term" value="F:glutaminyl-tRNA synthase (glutamine-hydrolyzing) activity"/>
    <property type="evidence" value="ECO:0007669"/>
    <property type="project" value="UniProtKB-UniRule"/>
</dbReference>
<dbReference type="GO" id="GO:0070681">
    <property type="term" value="P:glutaminyl-tRNAGln biosynthesis via transamidation"/>
    <property type="evidence" value="ECO:0007669"/>
    <property type="project" value="TreeGrafter"/>
</dbReference>
<dbReference type="GO" id="GO:0006412">
    <property type="term" value="P:translation"/>
    <property type="evidence" value="ECO:0007669"/>
    <property type="project" value="UniProtKB-UniRule"/>
</dbReference>
<dbReference type="FunFam" id="1.10.10.410:FF:000001">
    <property type="entry name" value="Aspartyl/glutamyl-tRNA(Asn/Gln) amidotransferase subunit B"/>
    <property type="match status" value="1"/>
</dbReference>
<dbReference type="FunFam" id="1.10.150.380:FF:000001">
    <property type="entry name" value="Aspartyl/glutamyl-tRNA(Asn/Gln) amidotransferase subunit B"/>
    <property type="match status" value="1"/>
</dbReference>
<dbReference type="Gene3D" id="1.10.10.410">
    <property type="match status" value="1"/>
</dbReference>
<dbReference type="Gene3D" id="1.10.150.380">
    <property type="entry name" value="GatB domain, N-terminal subdomain"/>
    <property type="match status" value="1"/>
</dbReference>
<dbReference type="HAMAP" id="MF_00121">
    <property type="entry name" value="GatB"/>
    <property type="match status" value="1"/>
</dbReference>
<dbReference type="InterPro" id="IPR017959">
    <property type="entry name" value="Asn/Gln-tRNA_amidoTrfase_suB/E"/>
</dbReference>
<dbReference type="InterPro" id="IPR006075">
    <property type="entry name" value="Asn/Gln-tRNA_Trfase_suB/E_cat"/>
</dbReference>
<dbReference type="InterPro" id="IPR018027">
    <property type="entry name" value="Asn/Gln_amidotransferase"/>
</dbReference>
<dbReference type="InterPro" id="IPR003789">
    <property type="entry name" value="Asn/Gln_tRNA_amidoTrase-B-like"/>
</dbReference>
<dbReference type="InterPro" id="IPR004413">
    <property type="entry name" value="GatB"/>
</dbReference>
<dbReference type="InterPro" id="IPR042114">
    <property type="entry name" value="GatB_C_1"/>
</dbReference>
<dbReference type="InterPro" id="IPR023168">
    <property type="entry name" value="GatB_Yqey_C_2"/>
</dbReference>
<dbReference type="InterPro" id="IPR017958">
    <property type="entry name" value="Gln-tRNA_amidoTrfase_suB_CS"/>
</dbReference>
<dbReference type="InterPro" id="IPR014746">
    <property type="entry name" value="Gln_synth/guanido_kin_cat_dom"/>
</dbReference>
<dbReference type="NCBIfam" id="TIGR00133">
    <property type="entry name" value="gatB"/>
    <property type="match status" value="1"/>
</dbReference>
<dbReference type="NCBIfam" id="NF004012">
    <property type="entry name" value="PRK05477.1-2"/>
    <property type="match status" value="1"/>
</dbReference>
<dbReference type="NCBIfam" id="NF004014">
    <property type="entry name" value="PRK05477.1-4"/>
    <property type="match status" value="1"/>
</dbReference>
<dbReference type="PANTHER" id="PTHR11659">
    <property type="entry name" value="GLUTAMYL-TRNA GLN AMIDOTRANSFERASE SUBUNIT B MITOCHONDRIAL AND PROKARYOTIC PET112-RELATED"/>
    <property type="match status" value="1"/>
</dbReference>
<dbReference type="PANTHER" id="PTHR11659:SF0">
    <property type="entry name" value="GLUTAMYL-TRNA(GLN) AMIDOTRANSFERASE SUBUNIT B, MITOCHONDRIAL"/>
    <property type="match status" value="1"/>
</dbReference>
<dbReference type="Pfam" id="PF02934">
    <property type="entry name" value="GatB_N"/>
    <property type="match status" value="1"/>
</dbReference>
<dbReference type="Pfam" id="PF02637">
    <property type="entry name" value="GatB_Yqey"/>
    <property type="match status" value="1"/>
</dbReference>
<dbReference type="SMART" id="SM00845">
    <property type="entry name" value="GatB_Yqey"/>
    <property type="match status" value="1"/>
</dbReference>
<dbReference type="SUPFAM" id="SSF89095">
    <property type="entry name" value="GatB/YqeY motif"/>
    <property type="match status" value="1"/>
</dbReference>
<dbReference type="SUPFAM" id="SSF55931">
    <property type="entry name" value="Glutamine synthetase/guanido kinase"/>
    <property type="match status" value="1"/>
</dbReference>
<dbReference type="PROSITE" id="PS01234">
    <property type="entry name" value="GATB"/>
    <property type="match status" value="1"/>
</dbReference>